<comment type="similarity">
    <text evidence="1">Belongs to the UPF0145 family.</text>
</comment>
<proteinExistence type="inferred from homology"/>
<accession>A4IXR0</accession>
<organism>
    <name type="scientific">Francisella tularensis subsp. tularensis (strain WY96-3418)</name>
    <dbReference type="NCBI Taxonomy" id="418136"/>
    <lineage>
        <taxon>Bacteria</taxon>
        <taxon>Pseudomonadati</taxon>
        <taxon>Pseudomonadota</taxon>
        <taxon>Gammaproteobacteria</taxon>
        <taxon>Thiotrichales</taxon>
        <taxon>Francisellaceae</taxon>
        <taxon>Francisella</taxon>
    </lineage>
</organism>
<evidence type="ECO:0000255" key="1">
    <source>
        <dbReference type="HAMAP-Rule" id="MF_00338"/>
    </source>
</evidence>
<feature type="chain" id="PRO_1000013002" description="UPF0145 protein FTW_0852">
    <location>
        <begin position="1"/>
        <end position="106"/>
    </location>
</feature>
<name>Y852_FRATW</name>
<protein>
    <recommendedName>
        <fullName evidence="1">UPF0145 protein FTW_0852</fullName>
    </recommendedName>
</protein>
<sequence>MILTTADTLGKREIIEYKGLVTGIIVRTPTITQGILGGLKNIIGGKNTSYTNVCKEARLHAEQEMINQAKELGANAIVAIRYDSSSLGGNTSGTEVFCYGTAVVVR</sequence>
<reference key="1">
    <citation type="journal article" date="2007" name="PLoS ONE">
        <title>Complete genomic characterization of a pathogenic A.II strain of Francisella tularensis subspecies tularensis.</title>
        <authorList>
            <person name="Beckstrom-Sternberg S.M."/>
            <person name="Auerbach R.K."/>
            <person name="Godbole S."/>
            <person name="Pearson J.V."/>
            <person name="Beckstrom-Sternberg J.S."/>
            <person name="Deng Z."/>
            <person name="Munk C."/>
            <person name="Kubota K."/>
            <person name="Zhou Y."/>
            <person name="Bruce D."/>
            <person name="Noronha J."/>
            <person name="Scheuermann R.H."/>
            <person name="Wang A."/>
            <person name="Wei X."/>
            <person name="Wang J."/>
            <person name="Hao J."/>
            <person name="Wagner D.M."/>
            <person name="Brettin T.S."/>
            <person name="Brown N."/>
            <person name="Gilna P."/>
            <person name="Keim P.S."/>
        </authorList>
    </citation>
    <scope>NUCLEOTIDE SEQUENCE [LARGE SCALE GENOMIC DNA]</scope>
    <source>
        <strain>WY96-3418</strain>
    </source>
</reference>
<gene>
    <name type="ordered locus">FTW_0852</name>
</gene>
<dbReference type="EMBL" id="CP000608">
    <property type="protein sequence ID" value="ABO46711.1"/>
    <property type="molecule type" value="Genomic_DNA"/>
</dbReference>
<dbReference type="RefSeq" id="WP_003016377.1">
    <property type="nucleotide sequence ID" value="NC_009257.1"/>
</dbReference>
<dbReference type="SMR" id="A4IXR0"/>
<dbReference type="KEGG" id="ftw:FTW_0852"/>
<dbReference type="HOGENOM" id="CLU_117144_1_1_6"/>
<dbReference type="Gene3D" id="3.30.110.70">
    <property type="entry name" value="Hypothetical protein apc22750. Chain B"/>
    <property type="match status" value="1"/>
</dbReference>
<dbReference type="HAMAP" id="MF_00338">
    <property type="entry name" value="UPF0145"/>
    <property type="match status" value="1"/>
</dbReference>
<dbReference type="InterPro" id="IPR035439">
    <property type="entry name" value="UPF0145_dom_sf"/>
</dbReference>
<dbReference type="InterPro" id="IPR002765">
    <property type="entry name" value="UPF0145_YbjQ-like"/>
</dbReference>
<dbReference type="PANTHER" id="PTHR34068">
    <property type="entry name" value="UPF0145 PROTEIN YBJQ"/>
    <property type="match status" value="1"/>
</dbReference>
<dbReference type="PANTHER" id="PTHR34068:SF1">
    <property type="entry name" value="UPF0145 PROTEIN YBJQ"/>
    <property type="match status" value="1"/>
</dbReference>
<dbReference type="Pfam" id="PF01906">
    <property type="entry name" value="YbjQ_1"/>
    <property type="match status" value="1"/>
</dbReference>
<dbReference type="SUPFAM" id="SSF117782">
    <property type="entry name" value="YbjQ-like"/>
    <property type="match status" value="1"/>
</dbReference>